<feature type="chain" id="PRO_0000140522" description="Delta-aminolevulinic acid dehydratase">
    <location>
        <begin position="1"/>
        <end position="322"/>
    </location>
</feature>
<feature type="active site" description="Schiff-base intermediate with substrate" evidence="1">
    <location>
        <position position="195"/>
    </location>
</feature>
<feature type="active site" description="Schiff-base intermediate with substrate" evidence="1">
    <location>
        <position position="248"/>
    </location>
</feature>
<feature type="binding site" evidence="1">
    <location>
        <position position="120"/>
    </location>
    <ligand>
        <name>Zn(2+)</name>
        <dbReference type="ChEBI" id="CHEBI:29105"/>
        <note>catalytic</note>
    </ligand>
</feature>
<feature type="binding site" evidence="1">
    <location>
        <position position="122"/>
    </location>
    <ligand>
        <name>Zn(2+)</name>
        <dbReference type="ChEBI" id="CHEBI:29105"/>
        <note>catalytic</note>
    </ligand>
</feature>
<feature type="binding site" evidence="1">
    <location>
        <position position="130"/>
    </location>
    <ligand>
        <name>Zn(2+)</name>
        <dbReference type="ChEBI" id="CHEBI:29105"/>
        <note>catalytic</note>
    </ligand>
</feature>
<feature type="binding site" evidence="1">
    <location>
        <position position="205"/>
    </location>
    <ligand>
        <name>5-aminolevulinate</name>
        <dbReference type="ChEBI" id="CHEBI:356416"/>
        <label>1</label>
    </ligand>
</feature>
<feature type="binding site" evidence="1">
    <location>
        <position position="217"/>
    </location>
    <ligand>
        <name>5-aminolevulinate</name>
        <dbReference type="ChEBI" id="CHEBI:356416"/>
        <label>1</label>
    </ligand>
</feature>
<feature type="binding site" evidence="1">
    <location>
        <position position="233"/>
    </location>
    <ligand>
        <name>Mg(2+)</name>
        <dbReference type="ChEBI" id="CHEBI:18420"/>
    </ligand>
</feature>
<feature type="binding site" evidence="1">
    <location>
        <position position="274"/>
    </location>
    <ligand>
        <name>5-aminolevulinate</name>
        <dbReference type="ChEBI" id="CHEBI:356416"/>
        <label>2</label>
    </ligand>
</feature>
<feature type="binding site" evidence="1">
    <location>
        <position position="312"/>
    </location>
    <ligand>
        <name>5-aminolevulinate</name>
        <dbReference type="ChEBI" id="CHEBI:356416"/>
        <label>2</label>
    </ligand>
</feature>
<dbReference type="EC" id="4.2.1.24"/>
<dbReference type="EMBL" id="AE000782">
    <property type="protein sequence ID" value="AAB89292.1"/>
    <property type="molecule type" value="Genomic_DNA"/>
</dbReference>
<dbReference type="PIR" id="E69496">
    <property type="entry name" value="E69496"/>
</dbReference>
<dbReference type="RefSeq" id="WP_010879466.1">
    <property type="nucleotide sequence ID" value="NC_000917.1"/>
</dbReference>
<dbReference type="SMR" id="O28305"/>
<dbReference type="STRING" id="224325.AF_1974"/>
<dbReference type="PaxDb" id="224325-AF_1974"/>
<dbReference type="EnsemblBacteria" id="AAB89292">
    <property type="protein sequence ID" value="AAB89292"/>
    <property type="gene ID" value="AF_1974"/>
</dbReference>
<dbReference type="GeneID" id="1485196"/>
<dbReference type="KEGG" id="afu:AF_1974"/>
<dbReference type="eggNOG" id="arCOG04300">
    <property type="taxonomic scope" value="Archaea"/>
</dbReference>
<dbReference type="HOGENOM" id="CLU_035731_0_0_2"/>
<dbReference type="OrthoDB" id="8493at2157"/>
<dbReference type="PhylomeDB" id="O28305"/>
<dbReference type="UniPathway" id="UPA00251">
    <property type="reaction ID" value="UER00318"/>
</dbReference>
<dbReference type="Proteomes" id="UP000002199">
    <property type="component" value="Chromosome"/>
</dbReference>
<dbReference type="GO" id="GO:0005829">
    <property type="term" value="C:cytosol"/>
    <property type="evidence" value="ECO:0007669"/>
    <property type="project" value="TreeGrafter"/>
</dbReference>
<dbReference type="GO" id="GO:0004655">
    <property type="term" value="F:porphobilinogen synthase activity"/>
    <property type="evidence" value="ECO:0007669"/>
    <property type="project" value="UniProtKB-EC"/>
</dbReference>
<dbReference type="GO" id="GO:0008270">
    <property type="term" value="F:zinc ion binding"/>
    <property type="evidence" value="ECO:0007669"/>
    <property type="project" value="TreeGrafter"/>
</dbReference>
<dbReference type="GO" id="GO:0006782">
    <property type="term" value="P:protoporphyrinogen IX biosynthetic process"/>
    <property type="evidence" value="ECO:0007669"/>
    <property type="project" value="UniProtKB-UniPathway"/>
</dbReference>
<dbReference type="CDD" id="cd00384">
    <property type="entry name" value="ALAD_PBGS"/>
    <property type="match status" value="1"/>
</dbReference>
<dbReference type="FunFam" id="3.20.20.70:FF:000019">
    <property type="entry name" value="Delta-aminolevulinic acid dehydratase"/>
    <property type="match status" value="1"/>
</dbReference>
<dbReference type="Gene3D" id="3.20.20.70">
    <property type="entry name" value="Aldolase class I"/>
    <property type="match status" value="1"/>
</dbReference>
<dbReference type="InterPro" id="IPR001731">
    <property type="entry name" value="ALAD"/>
</dbReference>
<dbReference type="InterPro" id="IPR030656">
    <property type="entry name" value="ALAD_AS"/>
</dbReference>
<dbReference type="InterPro" id="IPR013785">
    <property type="entry name" value="Aldolase_TIM"/>
</dbReference>
<dbReference type="NCBIfam" id="NF006762">
    <property type="entry name" value="PRK09283.1"/>
    <property type="match status" value="1"/>
</dbReference>
<dbReference type="PANTHER" id="PTHR11458">
    <property type="entry name" value="DELTA-AMINOLEVULINIC ACID DEHYDRATASE"/>
    <property type="match status" value="1"/>
</dbReference>
<dbReference type="PANTHER" id="PTHR11458:SF0">
    <property type="entry name" value="DELTA-AMINOLEVULINIC ACID DEHYDRATASE"/>
    <property type="match status" value="1"/>
</dbReference>
<dbReference type="Pfam" id="PF00490">
    <property type="entry name" value="ALAD"/>
    <property type="match status" value="1"/>
</dbReference>
<dbReference type="PIRSF" id="PIRSF001415">
    <property type="entry name" value="Porphbilin_synth"/>
    <property type="match status" value="1"/>
</dbReference>
<dbReference type="PRINTS" id="PR00144">
    <property type="entry name" value="DALDHYDRTASE"/>
</dbReference>
<dbReference type="SMART" id="SM01004">
    <property type="entry name" value="ALAD"/>
    <property type="match status" value="1"/>
</dbReference>
<dbReference type="SUPFAM" id="SSF51569">
    <property type="entry name" value="Aldolase"/>
    <property type="match status" value="1"/>
</dbReference>
<dbReference type="PROSITE" id="PS00169">
    <property type="entry name" value="D_ALA_DEHYDRATASE"/>
    <property type="match status" value="1"/>
</dbReference>
<keyword id="KW-0350">Heme biosynthesis</keyword>
<keyword id="KW-0456">Lyase</keyword>
<keyword id="KW-0460">Magnesium</keyword>
<keyword id="KW-0479">Metal-binding</keyword>
<keyword id="KW-0627">Porphyrin biosynthesis</keyword>
<keyword id="KW-1185">Reference proteome</keyword>
<keyword id="KW-0862">Zinc</keyword>
<evidence type="ECO:0000250" key="1"/>
<evidence type="ECO:0000305" key="2"/>
<proteinExistence type="inferred from homology"/>
<organism>
    <name type="scientific">Archaeoglobus fulgidus (strain ATCC 49558 / DSM 4304 / JCM 9628 / NBRC 100126 / VC-16)</name>
    <dbReference type="NCBI Taxonomy" id="224325"/>
    <lineage>
        <taxon>Archaea</taxon>
        <taxon>Methanobacteriati</taxon>
        <taxon>Methanobacteriota</taxon>
        <taxon>Archaeoglobi</taxon>
        <taxon>Archaeoglobales</taxon>
        <taxon>Archaeoglobaceae</taxon>
        <taxon>Archaeoglobus</taxon>
    </lineage>
</organism>
<gene>
    <name type="primary">hemB</name>
    <name type="ordered locus">AF_1974</name>
</gene>
<comment type="function">
    <text evidence="1">Catalyzes an early step in the biosynthesis of tetrapyrroles. Binds two molecules of 5-aminolevulinate per subunit, each at a distinct site, and catalyzes their condensation to form porphobilinogen (By similarity).</text>
</comment>
<comment type="catalytic activity">
    <reaction>
        <text>2 5-aminolevulinate = porphobilinogen + 2 H2O + H(+)</text>
        <dbReference type="Rhea" id="RHEA:24064"/>
        <dbReference type="ChEBI" id="CHEBI:15377"/>
        <dbReference type="ChEBI" id="CHEBI:15378"/>
        <dbReference type="ChEBI" id="CHEBI:58126"/>
        <dbReference type="ChEBI" id="CHEBI:356416"/>
        <dbReference type="EC" id="4.2.1.24"/>
    </reaction>
</comment>
<comment type="cofactor">
    <cofactor evidence="1">
        <name>Zn(2+)</name>
        <dbReference type="ChEBI" id="CHEBI:29105"/>
    </cofactor>
    <text evidence="1">Binds 1 zinc ion per monomer.</text>
</comment>
<comment type="pathway">
    <text>Porphyrin-containing compound metabolism; protoporphyrin-IX biosynthesis; coproporphyrinogen-III from 5-aminolevulinate: step 1/4.</text>
</comment>
<comment type="subunit">
    <text evidence="1">Homooctamer.</text>
</comment>
<comment type="similarity">
    <text evidence="2">Belongs to the ALAD family.</text>
</comment>
<name>HEM2_ARCFU</name>
<protein>
    <recommendedName>
        <fullName>Delta-aminolevulinic acid dehydratase</fullName>
        <shortName>ALAD</shortName>
        <shortName>ALADH</shortName>
        <ecNumber>4.2.1.24</ecNumber>
    </recommendedName>
    <alternativeName>
        <fullName>Porphobilinogen synthase</fullName>
    </alternativeName>
</protein>
<sequence length="322" mass="36398">MAEFPKVRMRRLRKANLRWMFREARLSPENLITPIFVDENIKEKKPIESMPDYFRIPLEMVDKEVEECLEKDLRSFILFGIPSYKDETGSSAYDQNGVIQKAVRRIKAEFPDAVIVTDVCLCEYTTHGHCGVVKDGEIVNDETLPIIGKTAVSHAESGADIVAPSGMMDGMVKAIREALDAAGFESTPIMSYSAKYASNFYSPFRDAAESGFKFGDRRGYQMDIHNAREAMREIELDVKEGADIIMVKPALPYLDIIRMVRERFDLPLAAYNVSGEYSMIKAAIKNGWLSEEAIYEVLISIKRAGADLIITYHSKEIAEKLQ</sequence>
<reference key="1">
    <citation type="journal article" date="1997" name="Nature">
        <title>The complete genome sequence of the hyperthermophilic, sulphate-reducing archaeon Archaeoglobus fulgidus.</title>
        <authorList>
            <person name="Klenk H.-P."/>
            <person name="Clayton R.A."/>
            <person name="Tomb J.-F."/>
            <person name="White O."/>
            <person name="Nelson K.E."/>
            <person name="Ketchum K.A."/>
            <person name="Dodson R.J."/>
            <person name="Gwinn M.L."/>
            <person name="Hickey E.K."/>
            <person name="Peterson J.D."/>
            <person name="Richardson D.L."/>
            <person name="Kerlavage A.R."/>
            <person name="Graham D.E."/>
            <person name="Kyrpides N.C."/>
            <person name="Fleischmann R.D."/>
            <person name="Quackenbush J."/>
            <person name="Lee N.H."/>
            <person name="Sutton G.G."/>
            <person name="Gill S.R."/>
            <person name="Kirkness E.F."/>
            <person name="Dougherty B.A."/>
            <person name="McKenney K."/>
            <person name="Adams M.D."/>
            <person name="Loftus B.J."/>
            <person name="Peterson S.N."/>
            <person name="Reich C.I."/>
            <person name="McNeil L.K."/>
            <person name="Badger J.H."/>
            <person name="Glodek A."/>
            <person name="Zhou L."/>
            <person name="Overbeek R."/>
            <person name="Gocayne J.D."/>
            <person name="Weidman J.F."/>
            <person name="McDonald L.A."/>
            <person name="Utterback T.R."/>
            <person name="Cotton M.D."/>
            <person name="Spriggs T."/>
            <person name="Artiach P."/>
            <person name="Kaine B.P."/>
            <person name="Sykes S.M."/>
            <person name="Sadow P.W."/>
            <person name="D'Andrea K.P."/>
            <person name="Bowman C."/>
            <person name="Fujii C."/>
            <person name="Garland S.A."/>
            <person name="Mason T.M."/>
            <person name="Olsen G.J."/>
            <person name="Fraser C.M."/>
            <person name="Smith H.O."/>
            <person name="Woese C.R."/>
            <person name="Venter J.C."/>
        </authorList>
    </citation>
    <scope>NUCLEOTIDE SEQUENCE [LARGE SCALE GENOMIC DNA]</scope>
    <source>
        <strain>ATCC 49558 / DSM 4304 / JCM 9628 / NBRC 100126 / VC-16</strain>
    </source>
</reference>
<accession>O28305</accession>